<proteinExistence type="inferred from homology"/>
<protein>
    <recommendedName>
        <fullName evidence="1">Chaperone protein DnaJ</fullName>
    </recommendedName>
</protein>
<dbReference type="EMBL" id="CP000051">
    <property type="protein sequence ID" value="AAX50605.1"/>
    <property type="molecule type" value="Genomic_DNA"/>
</dbReference>
<dbReference type="RefSeq" id="WP_009873740.1">
    <property type="nucleotide sequence ID" value="NC_007429.1"/>
</dbReference>
<dbReference type="SMR" id="Q3KM17"/>
<dbReference type="KEGG" id="cta:CTA_0370"/>
<dbReference type="HOGENOM" id="CLU_017633_0_7_0"/>
<dbReference type="Proteomes" id="UP000002532">
    <property type="component" value="Chromosome"/>
</dbReference>
<dbReference type="GO" id="GO:0005737">
    <property type="term" value="C:cytoplasm"/>
    <property type="evidence" value="ECO:0007669"/>
    <property type="project" value="UniProtKB-SubCell"/>
</dbReference>
<dbReference type="GO" id="GO:0005524">
    <property type="term" value="F:ATP binding"/>
    <property type="evidence" value="ECO:0007669"/>
    <property type="project" value="InterPro"/>
</dbReference>
<dbReference type="GO" id="GO:0031072">
    <property type="term" value="F:heat shock protein binding"/>
    <property type="evidence" value="ECO:0007669"/>
    <property type="project" value="InterPro"/>
</dbReference>
<dbReference type="GO" id="GO:0051082">
    <property type="term" value="F:unfolded protein binding"/>
    <property type="evidence" value="ECO:0007669"/>
    <property type="project" value="UniProtKB-UniRule"/>
</dbReference>
<dbReference type="GO" id="GO:0008270">
    <property type="term" value="F:zinc ion binding"/>
    <property type="evidence" value="ECO:0007669"/>
    <property type="project" value="UniProtKB-UniRule"/>
</dbReference>
<dbReference type="GO" id="GO:0051085">
    <property type="term" value="P:chaperone cofactor-dependent protein refolding"/>
    <property type="evidence" value="ECO:0007669"/>
    <property type="project" value="TreeGrafter"/>
</dbReference>
<dbReference type="GO" id="GO:0006260">
    <property type="term" value="P:DNA replication"/>
    <property type="evidence" value="ECO:0007669"/>
    <property type="project" value="UniProtKB-KW"/>
</dbReference>
<dbReference type="GO" id="GO:0042026">
    <property type="term" value="P:protein refolding"/>
    <property type="evidence" value="ECO:0007669"/>
    <property type="project" value="TreeGrafter"/>
</dbReference>
<dbReference type="GO" id="GO:0009408">
    <property type="term" value="P:response to heat"/>
    <property type="evidence" value="ECO:0007669"/>
    <property type="project" value="InterPro"/>
</dbReference>
<dbReference type="CDD" id="cd06257">
    <property type="entry name" value="DnaJ"/>
    <property type="match status" value="1"/>
</dbReference>
<dbReference type="CDD" id="cd10747">
    <property type="entry name" value="DnaJ_C"/>
    <property type="match status" value="1"/>
</dbReference>
<dbReference type="CDD" id="cd10719">
    <property type="entry name" value="DnaJ_zf"/>
    <property type="match status" value="1"/>
</dbReference>
<dbReference type="FunFam" id="1.10.287.110:FF:000034">
    <property type="entry name" value="Chaperone protein DnaJ"/>
    <property type="match status" value="1"/>
</dbReference>
<dbReference type="FunFam" id="2.60.260.20:FF:000005">
    <property type="entry name" value="Chaperone protein dnaJ 1, mitochondrial"/>
    <property type="match status" value="1"/>
</dbReference>
<dbReference type="FunFam" id="2.10.230.10:FF:000002">
    <property type="entry name" value="Molecular chaperone DnaJ"/>
    <property type="match status" value="1"/>
</dbReference>
<dbReference type="Gene3D" id="1.10.287.110">
    <property type="entry name" value="DnaJ domain"/>
    <property type="match status" value="1"/>
</dbReference>
<dbReference type="Gene3D" id="2.10.230.10">
    <property type="entry name" value="Heat shock protein DnaJ, cysteine-rich domain"/>
    <property type="match status" value="1"/>
</dbReference>
<dbReference type="Gene3D" id="2.60.260.20">
    <property type="entry name" value="Urease metallochaperone UreE, N-terminal domain"/>
    <property type="match status" value="2"/>
</dbReference>
<dbReference type="HAMAP" id="MF_01152">
    <property type="entry name" value="DnaJ"/>
    <property type="match status" value="1"/>
</dbReference>
<dbReference type="InterPro" id="IPR012724">
    <property type="entry name" value="DnaJ"/>
</dbReference>
<dbReference type="InterPro" id="IPR002939">
    <property type="entry name" value="DnaJ_C"/>
</dbReference>
<dbReference type="InterPro" id="IPR001623">
    <property type="entry name" value="DnaJ_domain"/>
</dbReference>
<dbReference type="InterPro" id="IPR018253">
    <property type="entry name" value="DnaJ_domain_CS"/>
</dbReference>
<dbReference type="InterPro" id="IPR008971">
    <property type="entry name" value="HSP40/DnaJ_pept-bd"/>
</dbReference>
<dbReference type="InterPro" id="IPR001305">
    <property type="entry name" value="HSP_DnaJ_Cys-rich_dom"/>
</dbReference>
<dbReference type="InterPro" id="IPR036410">
    <property type="entry name" value="HSP_DnaJ_Cys-rich_dom_sf"/>
</dbReference>
<dbReference type="InterPro" id="IPR036869">
    <property type="entry name" value="J_dom_sf"/>
</dbReference>
<dbReference type="NCBIfam" id="TIGR02349">
    <property type="entry name" value="DnaJ_bact"/>
    <property type="match status" value="1"/>
</dbReference>
<dbReference type="NCBIfam" id="NF008035">
    <property type="entry name" value="PRK10767.1"/>
    <property type="match status" value="1"/>
</dbReference>
<dbReference type="NCBIfam" id="NF010877">
    <property type="entry name" value="PRK14284.1"/>
    <property type="match status" value="1"/>
</dbReference>
<dbReference type="PANTHER" id="PTHR43096:SF48">
    <property type="entry name" value="CHAPERONE PROTEIN DNAJ"/>
    <property type="match status" value="1"/>
</dbReference>
<dbReference type="PANTHER" id="PTHR43096">
    <property type="entry name" value="DNAJ HOMOLOG 1, MITOCHONDRIAL-RELATED"/>
    <property type="match status" value="1"/>
</dbReference>
<dbReference type="Pfam" id="PF00226">
    <property type="entry name" value="DnaJ"/>
    <property type="match status" value="1"/>
</dbReference>
<dbReference type="Pfam" id="PF01556">
    <property type="entry name" value="DnaJ_C"/>
    <property type="match status" value="1"/>
</dbReference>
<dbReference type="Pfam" id="PF00684">
    <property type="entry name" value="DnaJ_CXXCXGXG"/>
    <property type="match status" value="1"/>
</dbReference>
<dbReference type="PRINTS" id="PR00625">
    <property type="entry name" value="JDOMAIN"/>
</dbReference>
<dbReference type="SMART" id="SM00271">
    <property type="entry name" value="DnaJ"/>
    <property type="match status" value="1"/>
</dbReference>
<dbReference type="SUPFAM" id="SSF46565">
    <property type="entry name" value="Chaperone J-domain"/>
    <property type="match status" value="1"/>
</dbReference>
<dbReference type="SUPFAM" id="SSF57938">
    <property type="entry name" value="DnaJ/Hsp40 cysteine-rich domain"/>
    <property type="match status" value="1"/>
</dbReference>
<dbReference type="SUPFAM" id="SSF49493">
    <property type="entry name" value="HSP40/DnaJ peptide-binding domain"/>
    <property type="match status" value="2"/>
</dbReference>
<dbReference type="PROSITE" id="PS00636">
    <property type="entry name" value="DNAJ_1"/>
    <property type="match status" value="1"/>
</dbReference>
<dbReference type="PROSITE" id="PS50076">
    <property type="entry name" value="DNAJ_2"/>
    <property type="match status" value="1"/>
</dbReference>
<dbReference type="PROSITE" id="PS51188">
    <property type="entry name" value="ZF_CR"/>
    <property type="match status" value="1"/>
</dbReference>
<organism>
    <name type="scientific">Chlamydia trachomatis serovar A (strain ATCC VR-571B / DSM 19440 / HAR-13)</name>
    <dbReference type="NCBI Taxonomy" id="315277"/>
    <lineage>
        <taxon>Bacteria</taxon>
        <taxon>Pseudomonadati</taxon>
        <taxon>Chlamydiota</taxon>
        <taxon>Chlamydiia</taxon>
        <taxon>Chlamydiales</taxon>
        <taxon>Chlamydiaceae</taxon>
        <taxon>Chlamydia/Chlamydophila group</taxon>
        <taxon>Chlamydia</taxon>
    </lineage>
</organism>
<feature type="chain" id="PRO_1000085175" description="Chaperone protein DnaJ">
    <location>
        <begin position="1"/>
        <end position="392"/>
    </location>
</feature>
<feature type="domain" description="J" evidence="1">
    <location>
        <begin position="2"/>
        <end position="67"/>
    </location>
</feature>
<feature type="repeat" description="CXXCXGXG motif">
    <location>
        <begin position="162"/>
        <end position="169"/>
    </location>
</feature>
<feature type="repeat" description="CXXCXGXG motif">
    <location>
        <begin position="179"/>
        <end position="186"/>
    </location>
</feature>
<feature type="repeat" description="CXXCXGXG motif">
    <location>
        <begin position="201"/>
        <end position="208"/>
    </location>
</feature>
<feature type="repeat" description="CXXCXGXG motif">
    <location>
        <begin position="215"/>
        <end position="222"/>
    </location>
</feature>
<feature type="zinc finger region" description="CR-type" evidence="1">
    <location>
        <begin position="149"/>
        <end position="227"/>
    </location>
</feature>
<feature type="binding site" evidence="1">
    <location>
        <position position="162"/>
    </location>
    <ligand>
        <name>Zn(2+)</name>
        <dbReference type="ChEBI" id="CHEBI:29105"/>
        <label>1</label>
    </ligand>
</feature>
<feature type="binding site" evidence="1">
    <location>
        <position position="165"/>
    </location>
    <ligand>
        <name>Zn(2+)</name>
        <dbReference type="ChEBI" id="CHEBI:29105"/>
        <label>1</label>
    </ligand>
</feature>
<feature type="binding site" evidence="1">
    <location>
        <position position="179"/>
    </location>
    <ligand>
        <name>Zn(2+)</name>
        <dbReference type="ChEBI" id="CHEBI:29105"/>
        <label>2</label>
    </ligand>
</feature>
<feature type="binding site" evidence="1">
    <location>
        <position position="182"/>
    </location>
    <ligand>
        <name>Zn(2+)</name>
        <dbReference type="ChEBI" id="CHEBI:29105"/>
        <label>2</label>
    </ligand>
</feature>
<feature type="binding site" evidence="1">
    <location>
        <position position="201"/>
    </location>
    <ligand>
        <name>Zn(2+)</name>
        <dbReference type="ChEBI" id="CHEBI:29105"/>
        <label>2</label>
    </ligand>
</feature>
<feature type="binding site" evidence="1">
    <location>
        <position position="204"/>
    </location>
    <ligand>
        <name>Zn(2+)</name>
        <dbReference type="ChEBI" id="CHEBI:29105"/>
        <label>2</label>
    </ligand>
</feature>
<feature type="binding site" evidence="1">
    <location>
        <position position="215"/>
    </location>
    <ligand>
        <name>Zn(2+)</name>
        <dbReference type="ChEBI" id="CHEBI:29105"/>
        <label>1</label>
    </ligand>
</feature>
<feature type="binding site" evidence="1">
    <location>
        <position position="218"/>
    </location>
    <ligand>
        <name>Zn(2+)</name>
        <dbReference type="ChEBI" id="CHEBI:29105"/>
        <label>1</label>
    </ligand>
</feature>
<sequence length="392" mass="41916">MDYYTILGVAKTATPEEIKKAYRKLAVKYHPDKNPGDAEAERRFKEVSEAYEVLGDAQKRESYDRYGKDGPFAGAGGFGGAGMGNMEDALRTFMGAFGGDFGGNGGGFFEGLFGGLGEAFGMRGGSESSRQGASKKVHITLSFEEAAKGVEKELLVSGYKSCDACSGSGANTAKGVKVCDRCKGSGQVVQSRGFFSMASTCPDCSGEGRVITDPCSVCRGQGRIKDKRSVHVNIPAGVDSGMRLKMEGYGDAGQNGAPAGDLYVFIDVEPHPVFERHGDDLVLELPIGFVDAALGIKKEIPTLLKEGTCRLSIPEGIQSGTVLKVRGQGFPNVHGKSRGDLLVRVSVETPQHLSNEQKDLLRQFAATEKAENFPKKRSFLDKIKGFFSDFAV</sequence>
<name>DNAJ_CHLTA</name>
<keyword id="KW-0143">Chaperone</keyword>
<keyword id="KW-0963">Cytoplasm</keyword>
<keyword id="KW-0235">DNA replication</keyword>
<keyword id="KW-0479">Metal-binding</keyword>
<keyword id="KW-0677">Repeat</keyword>
<keyword id="KW-0346">Stress response</keyword>
<keyword id="KW-0862">Zinc</keyword>
<keyword id="KW-0863">Zinc-finger</keyword>
<accession>Q3KM17</accession>
<evidence type="ECO:0000255" key="1">
    <source>
        <dbReference type="HAMAP-Rule" id="MF_01152"/>
    </source>
</evidence>
<reference key="1">
    <citation type="journal article" date="2005" name="Infect. Immun.">
        <title>Comparative genomic analysis of Chlamydia trachomatis oculotropic and genitotropic strains.</title>
        <authorList>
            <person name="Carlson J.H."/>
            <person name="Porcella S.F."/>
            <person name="McClarty G."/>
            <person name="Caldwell H.D."/>
        </authorList>
    </citation>
    <scope>NUCLEOTIDE SEQUENCE [LARGE SCALE GENOMIC DNA]</scope>
    <source>
        <strain>ATCC VR-571B / DSM 19440 / HAR-13</strain>
    </source>
</reference>
<gene>
    <name evidence="1" type="primary">dnaJ</name>
    <name type="ordered locus">CTA_0370</name>
</gene>
<comment type="function">
    <text evidence="1">Participates actively in the response to hyperosmotic and heat shock by preventing the aggregation of stress-denatured proteins and by disaggregating proteins, also in an autonomous, DnaK-independent fashion. Unfolded proteins bind initially to DnaJ; upon interaction with the DnaJ-bound protein, DnaK hydrolyzes its bound ATP, resulting in the formation of a stable complex. GrpE releases ADP from DnaK; ATP binding to DnaK triggers the release of the substrate protein, thus completing the reaction cycle. Several rounds of ATP-dependent interactions between DnaJ, DnaK and GrpE are required for fully efficient folding. Also involved, together with DnaK and GrpE, in the DNA replication of plasmids through activation of initiation proteins.</text>
</comment>
<comment type="cofactor">
    <cofactor evidence="1">
        <name>Zn(2+)</name>
        <dbReference type="ChEBI" id="CHEBI:29105"/>
    </cofactor>
    <text evidence="1">Binds 2 Zn(2+) ions per monomer.</text>
</comment>
<comment type="subunit">
    <text evidence="1">Homodimer.</text>
</comment>
<comment type="subcellular location">
    <subcellularLocation>
        <location evidence="1">Cytoplasm</location>
    </subcellularLocation>
</comment>
<comment type="domain">
    <text evidence="1">The J domain is necessary and sufficient to stimulate DnaK ATPase activity. Zinc center 1 plays an important role in the autonomous, DnaK-independent chaperone activity of DnaJ. Zinc center 2 is essential for interaction with DnaK and for DnaJ activity.</text>
</comment>
<comment type="similarity">
    <text evidence="1">Belongs to the DnaJ family.</text>
</comment>